<sequence length="493" mass="55910">MEKKLKSWQGWLLSGGSMVVVFVLGLCVSALMERRAEVASIFNNRKTVIKGIEARNELFKDDFPREYQTWTETAKTDFESEFNGNVAVDALEKRPEMVILWAGYAFSKDYSTPRGHMHAIEDITASLRTGSPAGPHDGPQPSTCWTCKSPDVPRMMEALGVDSFYNNKWAAFGDEIVNPIGCSDCHDPETMNLHISRPALIEAFQRQGKDITKATPQEMRSLVCAQCHVEYYFKGDGKYLTFPWDKGFTVEDMEAYYDEAGFYDYIHKLSRTPILKAQHPDYEIAQMGIHGQRGVSCADCHMPYKSEGGVKFSDHHIQSPLAMIDRTCQTCHRESEETLRNNVYERQRKANEIRNRLEQELAKAHIEAKFAWDKGATEDQMKDVLALIRQAQWRWDFGVASHGGSFHAPQEIQRILSHGLDRAMQARLAVSKVLAKHGYTEDVPMPDISTKAKAQEYIGLDMDAERAAKEKFLKTTVPAWLEKAKANGRLAQK</sequence>
<accession>Q8A7V7</accession>
<proteinExistence type="inferred from homology"/>
<name>NRFA_BACTN</name>
<keyword id="KW-0106">Calcium</keyword>
<keyword id="KW-0249">Electron transport</keyword>
<keyword id="KW-0349">Heme</keyword>
<keyword id="KW-0408">Iron</keyword>
<keyword id="KW-0479">Metal-binding</keyword>
<keyword id="KW-0560">Oxidoreductase</keyword>
<keyword id="KW-0574">Periplasm</keyword>
<keyword id="KW-1185">Reference proteome</keyword>
<keyword id="KW-0732">Signal</keyword>
<keyword id="KW-0813">Transport</keyword>
<protein>
    <recommendedName>
        <fullName evidence="1">Cytochrome c-552</fullName>
        <ecNumber evidence="1">1.7.2.2</ecNumber>
    </recommendedName>
    <alternativeName>
        <fullName evidence="1">Ammonia-forming cytochrome c nitrite reductase</fullName>
        <shortName evidence="1">Cytochrome c nitrite reductase</shortName>
    </alternativeName>
</protein>
<gene>
    <name evidence="1" type="primary">nrfA</name>
    <name type="ordered locus">BT_1417</name>
</gene>
<reference key="1">
    <citation type="journal article" date="2003" name="Science">
        <title>A genomic view of the human-Bacteroides thetaiotaomicron symbiosis.</title>
        <authorList>
            <person name="Xu J."/>
            <person name="Bjursell M.K."/>
            <person name="Himrod J."/>
            <person name="Deng S."/>
            <person name="Carmichael L.K."/>
            <person name="Chiang H.C."/>
            <person name="Hooper L.V."/>
            <person name="Gordon J.I."/>
        </authorList>
    </citation>
    <scope>NUCLEOTIDE SEQUENCE [LARGE SCALE GENOMIC DNA]</scope>
    <source>
        <strain>ATCC 29148 / DSM 2079 / JCM 5827 / CCUG 10774 / NCTC 10582 / VPI-5482 / E50</strain>
    </source>
</reference>
<feature type="signal peptide" evidence="1">
    <location>
        <begin position="1"/>
        <end position="25"/>
    </location>
</feature>
<feature type="chain" id="PRO_0000268960" description="Cytochrome c-552">
    <location>
        <begin position="26"/>
        <end position="493"/>
    </location>
</feature>
<feature type="binding site" description="axial binding residue" evidence="1">
    <location>
        <position position="116"/>
    </location>
    <ligand>
        <name>heme c</name>
        <dbReference type="ChEBI" id="CHEBI:61717"/>
        <label>3</label>
    </ligand>
    <ligandPart>
        <name>Fe</name>
        <dbReference type="ChEBI" id="CHEBI:18248"/>
    </ligandPart>
</feature>
<feature type="binding site" description="covalent" evidence="1">
    <location>
        <position position="144"/>
    </location>
    <ligand>
        <name>heme</name>
        <dbReference type="ChEBI" id="CHEBI:30413"/>
        <label>1</label>
    </ligand>
</feature>
<feature type="binding site" description="covalent" evidence="1">
    <location>
        <position position="147"/>
    </location>
    <ligand>
        <name>heme</name>
        <dbReference type="ChEBI" id="CHEBI:30413"/>
        <label>1</label>
    </ligand>
</feature>
<feature type="binding site" description="axial binding residue" evidence="1">
    <location>
        <position position="148"/>
    </location>
    <ligand>
        <name>heme</name>
        <dbReference type="ChEBI" id="CHEBI:30413"/>
        <label>1</label>
    </ligand>
    <ligandPart>
        <name>Fe</name>
        <dbReference type="ChEBI" id="CHEBI:18248"/>
    </ligandPart>
</feature>
<feature type="binding site" description="covalent" evidence="1">
    <location>
        <position position="182"/>
    </location>
    <ligand>
        <name>heme c</name>
        <dbReference type="ChEBI" id="CHEBI:61717"/>
        <label>2</label>
    </ligand>
</feature>
<feature type="binding site" description="covalent" evidence="1">
    <location>
        <position position="185"/>
    </location>
    <ligand>
        <name>heme c</name>
        <dbReference type="ChEBI" id="CHEBI:61717"/>
        <label>2</label>
    </ligand>
</feature>
<feature type="binding site" description="axial binding residue" evidence="1">
    <location>
        <position position="186"/>
    </location>
    <ligand>
        <name>heme c</name>
        <dbReference type="ChEBI" id="CHEBI:61717"/>
        <label>2</label>
    </ligand>
    <ligandPart>
        <name>Fe</name>
        <dbReference type="ChEBI" id="CHEBI:18248"/>
    </ligandPart>
</feature>
<feature type="binding site" description="covalent" evidence="1">
    <location>
        <position position="224"/>
    </location>
    <ligand>
        <name>heme c</name>
        <dbReference type="ChEBI" id="CHEBI:61717"/>
        <label>3</label>
    </ligand>
</feature>
<feature type="binding site" description="covalent" evidence="1">
    <location>
        <position position="227"/>
    </location>
    <ligand>
        <name>heme c</name>
        <dbReference type="ChEBI" id="CHEBI:61717"/>
        <label>3</label>
    </ligand>
</feature>
<feature type="binding site" description="axial binding residue" evidence="1">
    <location>
        <position position="228"/>
    </location>
    <ligand>
        <name>heme c</name>
        <dbReference type="ChEBI" id="CHEBI:61717"/>
        <label>3</label>
    </ligand>
    <ligandPart>
        <name>Fe</name>
        <dbReference type="ChEBI" id="CHEBI:18248"/>
    </ligandPart>
</feature>
<feature type="binding site" evidence="1">
    <location>
        <position position="230"/>
    </location>
    <ligand>
        <name>Ca(2+)</name>
        <dbReference type="ChEBI" id="CHEBI:29108"/>
    </ligand>
</feature>
<feature type="binding site" evidence="1">
    <location>
        <position position="231"/>
    </location>
    <ligand>
        <name>Ca(2+)</name>
        <dbReference type="ChEBI" id="CHEBI:29108"/>
    </ligand>
</feature>
<feature type="binding site" evidence="1">
    <location>
        <position position="231"/>
    </location>
    <ligand>
        <name>substrate</name>
    </ligand>
</feature>
<feature type="binding site" evidence="1">
    <location>
        <position position="276"/>
    </location>
    <ligand>
        <name>Ca(2+)</name>
        <dbReference type="ChEBI" id="CHEBI:29108"/>
    </ligand>
</feature>
<feature type="binding site" evidence="1">
    <location>
        <position position="278"/>
    </location>
    <ligand>
        <name>Ca(2+)</name>
        <dbReference type="ChEBI" id="CHEBI:29108"/>
    </ligand>
</feature>
<feature type="binding site" evidence="1">
    <location>
        <position position="279"/>
    </location>
    <ligand>
        <name>substrate</name>
    </ligand>
</feature>
<feature type="binding site" description="axial binding residue" evidence="1">
    <location>
        <position position="290"/>
    </location>
    <ligand>
        <name>heme c</name>
        <dbReference type="ChEBI" id="CHEBI:61717"/>
        <label>5</label>
    </ligand>
    <ligandPart>
        <name>Fe</name>
        <dbReference type="ChEBI" id="CHEBI:18248"/>
    </ligandPart>
</feature>
<feature type="binding site" description="covalent" evidence="1">
    <location>
        <position position="297"/>
    </location>
    <ligand>
        <name>heme c</name>
        <dbReference type="ChEBI" id="CHEBI:61717"/>
        <label>4</label>
    </ligand>
</feature>
<feature type="binding site" description="covalent" evidence="1">
    <location>
        <position position="300"/>
    </location>
    <ligand>
        <name>heme c</name>
        <dbReference type="ChEBI" id="CHEBI:61717"/>
        <label>4</label>
    </ligand>
</feature>
<feature type="binding site" description="axial binding residue" evidence="1">
    <location>
        <position position="301"/>
    </location>
    <ligand>
        <name>heme c</name>
        <dbReference type="ChEBI" id="CHEBI:61717"/>
        <label>4</label>
    </ligand>
    <ligandPart>
        <name>Fe</name>
        <dbReference type="ChEBI" id="CHEBI:18248"/>
    </ligandPart>
</feature>
<feature type="binding site" description="axial binding residue" evidence="1">
    <location>
        <position position="315"/>
    </location>
    <ligand>
        <name>heme c</name>
        <dbReference type="ChEBI" id="CHEBI:61717"/>
        <label>2</label>
    </ligand>
    <ligandPart>
        <name>Fe</name>
        <dbReference type="ChEBI" id="CHEBI:18248"/>
    </ligandPart>
</feature>
<feature type="binding site" description="covalent" evidence="1">
    <location>
        <position position="328"/>
    </location>
    <ligand>
        <name>heme c</name>
        <dbReference type="ChEBI" id="CHEBI:61717"/>
        <label>5</label>
    </ligand>
</feature>
<feature type="binding site" description="covalent" evidence="1">
    <location>
        <position position="331"/>
    </location>
    <ligand>
        <name>heme c</name>
        <dbReference type="ChEBI" id="CHEBI:61717"/>
        <label>5</label>
    </ligand>
</feature>
<feature type="binding site" description="axial binding residue" evidence="1">
    <location>
        <position position="332"/>
    </location>
    <ligand>
        <name>heme c</name>
        <dbReference type="ChEBI" id="CHEBI:61717"/>
        <label>5</label>
    </ligand>
    <ligandPart>
        <name>Fe</name>
        <dbReference type="ChEBI" id="CHEBI:18248"/>
    </ligandPart>
</feature>
<feature type="binding site" description="axial binding residue" evidence="1">
    <location>
        <position position="407"/>
    </location>
    <ligand>
        <name>heme c</name>
        <dbReference type="ChEBI" id="CHEBI:61717"/>
        <label>4</label>
    </ligand>
    <ligandPart>
        <name>Fe</name>
        <dbReference type="ChEBI" id="CHEBI:18248"/>
    </ligandPart>
</feature>
<dbReference type="EC" id="1.7.2.2" evidence="1"/>
<dbReference type="EMBL" id="AE015928">
    <property type="protein sequence ID" value="AAO76524.1"/>
    <property type="molecule type" value="Genomic_DNA"/>
</dbReference>
<dbReference type="RefSeq" id="NP_810330.1">
    <property type="nucleotide sequence ID" value="NC_004663.1"/>
</dbReference>
<dbReference type="RefSeq" id="WP_011107764.1">
    <property type="nucleotide sequence ID" value="NC_004663.1"/>
</dbReference>
<dbReference type="SMR" id="Q8A7V7"/>
<dbReference type="FunCoup" id="Q8A7V7">
    <property type="interactions" value="24"/>
</dbReference>
<dbReference type="STRING" id="226186.BT_1417"/>
<dbReference type="PaxDb" id="226186-BT_1417"/>
<dbReference type="EnsemblBacteria" id="AAO76524">
    <property type="protein sequence ID" value="AAO76524"/>
    <property type="gene ID" value="BT_1417"/>
</dbReference>
<dbReference type="GeneID" id="60927400"/>
<dbReference type="KEGG" id="bth:BT_1417"/>
<dbReference type="PATRIC" id="fig|226186.12.peg.1450"/>
<dbReference type="eggNOG" id="COG3303">
    <property type="taxonomic scope" value="Bacteria"/>
</dbReference>
<dbReference type="HOGENOM" id="CLU_035040_1_0_10"/>
<dbReference type="InParanoid" id="Q8A7V7"/>
<dbReference type="OrthoDB" id="9780421at2"/>
<dbReference type="UniPathway" id="UPA00653"/>
<dbReference type="Proteomes" id="UP000001414">
    <property type="component" value="Chromosome"/>
</dbReference>
<dbReference type="GO" id="GO:0030288">
    <property type="term" value="C:outer membrane-bounded periplasmic space"/>
    <property type="evidence" value="ECO:0000318"/>
    <property type="project" value="GO_Central"/>
</dbReference>
<dbReference type="GO" id="GO:0005509">
    <property type="term" value="F:calcium ion binding"/>
    <property type="evidence" value="ECO:0007669"/>
    <property type="project" value="UniProtKB-UniRule"/>
</dbReference>
<dbReference type="GO" id="GO:0020037">
    <property type="term" value="F:heme binding"/>
    <property type="evidence" value="ECO:0000318"/>
    <property type="project" value="GO_Central"/>
</dbReference>
<dbReference type="GO" id="GO:0005506">
    <property type="term" value="F:iron ion binding"/>
    <property type="evidence" value="ECO:0007669"/>
    <property type="project" value="UniProtKB-UniRule"/>
</dbReference>
<dbReference type="GO" id="GO:0042279">
    <property type="term" value="F:nitrite reductase (cytochrome, ammonia-forming) activity"/>
    <property type="evidence" value="ECO:0000318"/>
    <property type="project" value="GO_Central"/>
</dbReference>
<dbReference type="GO" id="GO:0019645">
    <property type="term" value="P:anaerobic electron transport chain"/>
    <property type="evidence" value="ECO:0000318"/>
    <property type="project" value="GO_Central"/>
</dbReference>
<dbReference type="GO" id="GO:0042128">
    <property type="term" value="P:nitrate assimilation"/>
    <property type="evidence" value="ECO:0007669"/>
    <property type="project" value="UniProtKB-UniRule"/>
</dbReference>
<dbReference type="CDD" id="cd00548">
    <property type="entry name" value="NrfA-like"/>
    <property type="match status" value="1"/>
</dbReference>
<dbReference type="FunFam" id="1.10.1130.10:FF:000002">
    <property type="entry name" value="Cytochrome c-552"/>
    <property type="match status" value="1"/>
</dbReference>
<dbReference type="FunFam" id="1.20.140.10:FF:000014">
    <property type="entry name" value="Cytochrome c-552"/>
    <property type="match status" value="1"/>
</dbReference>
<dbReference type="Gene3D" id="1.20.140.10">
    <property type="entry name" value="Butyryl-CoA Dehydrogenase, subunit A, domain 3"/>
    <property type="match status" value="1"/>
</dbReference>
<dbReference type="Gene3D" id="1.10.1130.10">
    <property type="entry name" value="Flavocytochrome C3, Chain A"/>
    <property type="match status" value="1"/>
</dbReference>
<dbReference type="HAMAP" id="MF_01182">
    <property type="entry name" value="Cytochrom_C552"/>
    <property type="match status" value="1"/>
</dbReference>
<dbReference type="InterPro" id="IPR003321">
    <property type="entry name" value="Cyt_c552"/>
</dbReference>
<dbReference type="InterPro" id="IPR017570">
    <property type="entry name" value="Cyt_c_NO2Rdtase_formate-dep"/>
</dbReference>
<dbReference type="InterPro" id="IPR036280">
    <property type="entry name" value="Multihaem_cyt_sf"/>
</dbReference>
<dbReference type="NCBIfam" id="NF008339">
    <property type="entry name" value="PRK11125.1"/>
    <property type="match status" value="1"/>
</dbReference>
<dbReference type="PANTHER" id="PTHR30633:SF0">
    <property type="entry name" value="CYTOCHROME C-552"/>
    <property type="match status" value="1"/>
</dbReference>
<dbReference type="PANTHER" id="PTHR30633">
    <property type="entry name" value="CYTOCHROME C-552 RESPIRATORY NITRITE REDUCTASE"/>
    <property type="match status" value="1"/>
</dbReference>
<dbReference type="Pfam" id="PF02335">
    <property type="entry name" value="Cytochrom_C552"/>
    <property type="match status" value="1"/>
</dbReference>
<dbReference type="PIRSF" id="PIRSF000243">
    <property type="entry name" value="Cyt_c552"/>
    <property type="match status" value="1"/>
</dbReference>
<dbReference type="SUPFAM" id="SSF48695">
    <property type="entry name" value="Multiheme cytochromes"/>
    <property type="match status" value="1"/>
</dbReference>
<dbReference type="PROSITE" id="PS51008">
    <property type="entry name" value="MULTIHEME_CYTC"/>
    <property type="match status" value="1"/>
</dbReference>
<comment type="function">
    <text evidence="1">Catalyzes the reduction of nitrite to ammonia, consuming six electrons in the process.</text>
</comment>
<comment type="catalytic activity">
    <reaction evidence="1">
        <text>6 Fe(III)-[cytochrome c] + NH4(+) + 2 H2O = 6 Fe(II)-[cytochrome c] + nitrite + 8 H(+)</text>
        <dbReference type="Rhea" id="RHEA:13089"/>
        <dbReference type="Rhea" id="RHEA-COMP:10350"/>
        <dbReference type="Rhea" id="RHEA-COMP:14399"/>
        <dbReference type="ChEBI" id="CHEBI:15377"/>
        <dbReference type="ChEBI" id="CHEBI:15378"/>
        <dbReference type="ChEBI" id="CHEBI:16301"/>
        <dbReference type="ChEBI" id="CHEBI:28938"/>
        <dbReference type="ChEBI" id="CHEBI:29033"/>
        <dbReference type="ChEBI" id="CHEBI:29034"/>
        <dbReference type="EC" id="1.7.2.2"/>
    </reaction>
</comment>
<comment type="cofactor">
    <cofactor evidence="1">
        <name>Ca(2+)</name>
        <dbReference type="ChEBI" id="CHEBI:29108"/>
    </cofactor>
    <text evidence="1">Binds 1 Ca(2+) ion per monomer.</text>
</comment>
<comment type="cofactor">
    <cofactor evidence="1">
        <name>heme c</name>
        <dbReference type="ChEBI" id="CHEBI:61717"/>
    </cofactor>
    <text evidence="1">Binds 5 heme c groups covalently per monomer.</text>
</comment>
<comment type="pathway">
    <text evidence="1">Nitrogen metabolism; nitrate reduction (assimilation).</text>
</comment>
<comment type="subcellular location">
    <subcellularLocation>
        <location evidence="1">Periplasm</location>
    </subcellularLocation>
</comment>
<comment type="miscellaneous">
    <text>This protein is not predicted to have a signal sequence by the program SignalP. All other members of this family are periplasmic proteins.</text>
</comment>
<comment type="similarity">
    <text evidence="1">Belongs to the cytochrome c-552 family.</text>
</comment>
<evidence type="ECO:0000255" key="1">
    <source>
        <dbReference type="HAMAP-Rule" id="MF_01182"/>
    </source>
</evidence>
<organism>
    <name type="scientific">Bacteroides thetaiotaomicron (strain ATCC 29148 / DSM 2079 / JCM 5827 / CCUG 10774 / NCTC 10582 / VPI-5482 / E50)</name>
    <dbReference type="NCBI Taxonomy" id="226186"/>
    <lineage>
        <taxon>Bacteria</taxon>
        <taxon>Pseudomonadati</taxon>
        <taxon>Bacteroidota</taxon>
        <taxon>Bacteroidia</taxon>
        <taxon>Bacteroidales</taxon>
        <taxon>Bacteroidaceae</taxon>
        <taxon>Bacteroides</taxon>
    </lineage>
</organism>